<accession>O74814</accession>
<evidence type="ECO:0000255" key="1"/>
<evidence type="ECO:0000255" key="2">
    <source>
        <dbReference type="PROSITE-ProRule" id="PRU00724"/>
    </source>
</evidence>
<evidence type="ECO:0000256" key="3">
    <source>
        <dbReference type="SAM" id="MobiDB-lite"/>
    </source>
</evidence>
<evidence type="ECO:0000269" key="4">
    <source>
    </source>
</evidence>
<evidence type="ECO:0000305" key="5"/>
<reference key="1">
    <citation type="journal article" date="2002" name="Nature">
        <title>The genome sequence of Schizosaccharomyces pombe.</title>
        <authorList>
            <person name="Wood V."/>
            <person name="Gwilliam R."/>
            <person name="Rajandream M.A."/>
            <person name="Lyne M.H."/>
            <person name="Lyne R."/>
            <person name="Stewart A."/>
            <person name="Sgouros J.G."/>
            <person name="Peat N."/>
            <person name="Hayles J."/>
            <person name="Baker S.G."/>
            <person name="Basham D."/>
            <person name="Bowman S."/>
            <person name="Brooks K."/>
            <person name="Brown D."/>
            <person name="Brown S."/>
            <person name="Chillingworth T."/>
            <person name="Churcher C.M."/>
            <person name="Collins M."/>
            <person name="Connor R."/>
            <person name="Cronin A."/>
            <person name="Davis P."/>
            <person name="Feltwell T."/>
            <person name="Fraser A."/>
            <person name="Gentles S."/>
            <person name="Goble A."/>
            <person name="Hamlin N."/>
            <person name="Harris D.E."/>
            <person name="Hidalgo J."/>
            <person name="Hodgson G."/>
            <person name="Holroyd S."/>
            <person name="Hornsby T."/>
            <person name="Howarth S."/>
            <person name="Huckle E.J."/>
            <person name="Hunt S."/>
            <person name="Jagels K."/>
            <person name="James K.D."/>
            <person name="Jones L."/>
            <person name="Jones M."/>
            <person name="Leather S."/>
            <person name="McDonald S."/>
            <person name="McLean J."/>
            <person name="Mooney P."/>
            <person name="Moule S."/>
            <person name="Mungall K.L."/>
            <person name="Murphy L.D."/>
            <person name="Niblett D."/>
            <person name="Odell C."/>
            <person name="Oliver K."/>
            <person name="O'Neil S."/>
            <person name="Pearson D."/>
            <person name="Quail M.A."/>
            <person name="Rabbinowitsch E."/>
            <person name="Rutherford K.M."/>
            <person name="Rutter S."/>
            <person name="Saunders D."/>
            <person name="Seeger K."/>
            <person name="Sharp S."/>
            <person name="Skelton J."/>
            <person name="Simmonds M.N."/>
            <person name="Squares R."/>
            <person name="Squares S."/>
            <person name="Stevens K."/>
            <person name="Taylor K."/>
            <person name="Taylor R.G."/>
            <person name="Tivey A."/>
            <person name="Walsh S.V."/>
            <person name="Warren T."/>
            <person name="Whitehead S."/>
            <person name="Woodward J.R."/>
            <person name="Volckaert G."/>
            <person name="Aert R."/>
            <person name="Robben J."/>
            <person name="Grymonprez B."/>
            <person name="Weltjens I."/>
            <person name="Vanstreels E."/>
            <person name="Rieger M."/>
            <person name="Schaefer M."/>
            <person name="Mueller-Auer S."/>
            <person name="Gabel C."/>
            <person name="Fuchs M."/>
            <person name="Duesterhoeft A."/>
            <person name="Fritzc C."/>
            <person name="Holzer E."/>
            <person name="Moestl D."/>
            <person name="Hilbert H."/>
            <person name="Borzym K."/>
            <person name="Langer I."/>
            <person name="Beck A."/>
            <person name="Lehrach H."/>
            <person name="Reinhardt R."/>
            <person name="Pohl T.M."/>
            <person name="Eger P."/>
            <person name="Zimmermann W."/>
            <person name="Wedler H."/>
            <person name="Wambutt R."/>
            <person name="Purnelle B."/>
            <person name="Goffeau A."/>
            <person name="Cadieu E."/>
            <person name="Dreano S."/>
            <person name="Gloux S."/>
            <person name="Lelaure V."/>
            <person name="Mottier S."/>
            <person name="Galibert F."/>
            <person name="Aves S.J."/>
            <person name="Xiang Z."/>
            <person name="Hunt C."/>
            <person name="Moore K."/>
            <person name="Hurst S.M."/>
            <person name="Lucas M."/>
            <person name="Rochet M."/>
            <person name="Gaillardin C."/>
            <person name="Tallada V.A."/>
            <person name="Garzon A."/>
            <person name="Thode G."/>
            <person name="Daga R.R."/>
            <person name="Cruzado L."/>
            <person name="Jimenez J."/>
            <person name="Sanchez M."/>
            <person name="del Rey F."/>
            <person name="Benito J."/>
            <person name="Dominguez A."/>
            <person name="Revuelta J.L."/>
            <person name="Moreno S."/>
            <person name="Armstrong J."/>
            <person name="Forsburg S.L."/>
            <person name="Cerutti L."/>
            <person name="Lowe T."/>
            <person name="McCombie W.R."/>
            <person name="Paulsen I."/>
            <person name="Potashkin J."/>
            <person name="Shpakovski G.V."/>
            <person name="Ussery D."/>
            <person name="Barrell B.G."/>
            <person name="Nurse P."/>
        </authorList>
    </citation>
    <scope>NUCLEOTIDE SEQUENCE [LARGE SCALE GENOMIC DNA]</scope>
    <source>
        <strain>972 / ATCC 24843</strain>
    </source>
</reference>
<reference key="2">
    <citation type="journal article" date="2008" name="J. Proteome Res.">
        <title>Phosphoproteome analysis of fission yeast.</title>
        <authorList>
            <person name="Wilson-Grady J.T."/>
            <person name="Villen J."/>
            <person name="Gygi S.P."/>
        </authorList>
    </citation>
    <scope>PHOSPHORYLATION [LARGE SCALE ANALYSIS] AT SER-372</scope>
    <scope>IDENTIFICATION BY MASS SPECTROMETRY</scope>
</reference>
<gene>
    <name type="ORF">SPBC337.03</name>
</gene>
<sequence length="387" mass="42927">MALTPDTVSSKLATLNETQESITGIAHWVMFHKRYADEIVQIWLEALYESSSNKKLLLLYLLNEVVQQSRVKKISEYIDAVSPYVVNSVADAYASVPASIKTKIKYVFDVWCQRGIFSKEILLSLQERFNNAENSGHSNYYPVGPPEWAPYTRLMTQTSLYAKSAHSTKTVVDALYKSYLEKQSDYSELLDNYKKQLNKASESCKGNYQACIESRSTLITSLESLIEEQKKLLSEEEESLKSVESIISNLENKESTTATSTLTDAGFGDKSSTAGKHNVETTSPPSSSPNSDDAYSPQVDSYSPSINSVPYTSNIVENPSEDNLSPLPPPASGPYSQEEEETSLFKSQRKEENEEESKELPEDSDIYGKDSSPSSDDSSAAGLYGDS</sequence>
<proteinExistence type="evidence at protein level"/>
<organism>
    <name type="scientific">Schizosaccharomyces pombe (strain 972 / ATCC 24843)</name>
    <name type="common">Fission yeast</name>
    <dbReference type="NCBI Taxonomy" id="284812"/>
    <lineage>
        <taxon>Eukaryota</taxon>
        <taxon>Fungi</taxon>
        <taxon>Dikarya</taxon>
        <taxon>Ascomycota</taxon>
        <taxon>Taphrinomycotina</taxon>
        <taxon>Schizosaccharomycetes</taxon>
        <taxon>Schizosaccharomycetales</taxon>
        <taxon>Schizosaccharomycetaceae</taxon>
        <taxon>Schizosaccharomyces</taxon>
    </lineage>
</organism>
<keyword id="KW-0175">Coiled coil</keyword>
<keyword id="KW-0597">Phosphoprotein</keyword>
<keyword id="KW-1185">Reference proteome</keyword>
<protein>
    <recommendedName>
        <fullName>UPF0400 protein C337.03</fullName>
    </recommendedName>
</protein>
<dbReference type="EMBL" id="CU329671">
    <property type="protein sequence ID" value="CAA21273.1"/>
    <property type="molecule type" value="Genomic_DNA"/>
</dbReference>
<dbReference type="PIR" id="T40256">
    <property type="entry name" value="T40256"/>
</dbReference>
<dbReference type="SMR" id="O74814"/>
<dbReference type="BioGRID" id="276753">
    <property type="interactions" value="154"/>
</dbReference>
<dbReference type="FunCoup" id="O74814">
    <property type="interactions" value="40"/>
</dbReference>
<dbReference type="STRING" id="284812.O74814"/>
<dbReference type="iPTMnet" id="O74814"/>
<dbReference type="PaxDb" id="4896-SPBC337.03.1"/>
<dbReference type="EnsemblFungi" id="SPBC337.03.1">
    <property type="protein sequence ID" value="SPBC337.03.1:pep"/>
    <property type="gene ID" value="SPBC337.03"/>
</dbReference>
<dbReference type="KEGG" id="spo:2540220"/>
<dbReference type="PomBase" id="SPBC337.03"/>
<dbReference type="VEuPathDB" id="FungiDB:SPBC337.03"/>
<dbReference type="eggNOG" id="KOG2669">
    <property type="taxonomic scope" value="Eukaryota"/>
</dbReference>
<dbReference type="HOGENOM" id="CLU_042070_0_0_1"/>
<dbReference type="InParanoid" id="O74814"/>
<dbReference type="PhylomeDB" id="O74814"/>
<dbReference type="PRO" id="PR:O74814"/>
<dbReference type="Proteomes" id="UP000002485">
    <property type="component" value="Chromosome II"/>
</dbReference>
<dbReference type="GO" id="GO:0005829">
    <property type="term" value="C:cytosol"/>
    <property type="evidence" value="ECO:0007005"/>
    <property type="project" value="PomBase"/>
</dbReference>
<dbReference type="GO" id="GO:0033620">
    <property type="term" value="C:Mei2 nuclear dot complex"/>
    <property type="evidence" value="ECO:0000314"/>
    <property type="project" value="PomBase"/>
</dbReference>
<dbReference type="GO" id="GO:0005634">
    <property type="term" value="C:nucleus"/>
    <property type="evidence" value="ECO:0000314"/>
    <property type="project" value="PomBase"/>
</dbReference>
<dbReference type="GO" id="GO:0140693">
    <property type="term" value="F:molecular condensate scaffold activity"/>
    <property type="evidence" value="ECO:0000269"/>
    <property type="project" value="PomBase"/>
</dbReference>
<dbReference type="GO" id="GO:0099122">
    <property type="term" value="F:RNA polymerase II C-terminal domain binding"/>
    <property type="evidence" value="ECO:0000304"/>
    <property type="project" value="PomBase"/>
</dbReference>
<dbReference type="GO" id="GO:0000993">
    <property type="term" value="F:RNA polymerase II complex binding"/>
    <property type="evidence" value="ECO:0000318"/>
    <property type="project" value="GO_Central"/>
</dbReference>
<dbReference type="GO" id="GO:0031124">
    <property type="term" value="P:mRNA 3'-end processing"/>
    <property type="evidence" value="ECO:0000318"/>
    <property type="project" value="GO_Central"/>
</dbReference>
<dbReference type="CDD" id="cd17003">
    <property type="entry name" value="CID_Rtt103"/>
    <property type="match status" value="1"/>
</dbReference>
<dbReference type="Gene3D" id="1.25.40.90">
    <property type="match status" value="1"/>
</dbReference>
<dbReference type="InterPro" id="IPR006569">
    <property type="entry name" value="CID_dom"/>
</dbReference>
<dbReference type="InterPro" id="IPR008942">
    <property type="entry name" value="ENTH_VHS"/>
</dbReference>
<dbReference type="InterPro" id="IPR047883">
    <property type="entry name" value="Rtt103-like_CID"/>
</dbReference>
<dbReference type="PANTHER" id="PTHR12460:SF0">
    <property type="entry name" value="CID DOMAIN-CONTAINING PROTEIN-RELATED"/>
    <property type="match status" value="1"/>
</dbReference>
<dbReference type="PANTHER" id="PTHR12460">
    <property type="entry name" value="CYCLIN-DEPENDENT KINASE INHIBITOR-RELATED PROTEIN"/>
    <property type="match status" value="1"/>
</dbReference>
<dbReference type="Pfam" id="PF04818">
    <property type="entry name" value="CID"/>
    <property type="match status" value="1"/>
</dbReference>
<dbReference type="SMART" id="SM00582">
    <property type="entry name" value="RPR"/>
    <property type="match status" value="1"/>
</dbReference>
<dbReference type="SUPFAM" id="SSF48464">
    <property type="entry name" value="ENTH/VHS domain"/>
    <property type="match status" value="1"/>
</dbReference>
<dbReference type="PROSITE" id="PS51391">
    <property type="entry name" value="CID"/>
    <property type="match status" value="1"/>
</dbReference>
<feature type="chain" id="PRO_0000268706" description="UPF0400 protein C337.03">
    <location>
        <begin position="1"/>
        <end position="387"/>
    </location>
</feature>
<feature type="domain" description="CID" evidence="2">
    <location>
        <begin position="1"/>
        <end position="133"/>
    </location>
</feature>
<feature type="region of interest" description="Disordered" evidence="3">
    <location>
        <begin position="257"/>
        <end position="387"/>
    </location>
</feature>
<feature type="coiled-coil region" evidence="1">
    <location>
        <begin position="177"/>
        <end position="255"/>
    </location>
</feature>
<feature type="compositionally biased region" description="Low complexity" evidence="3">
    <location>
        <begin position="283"/>
        <end position="297"/>
    </location>
</feature>
<feature type="compositionally biased region" description="Polar residues" evidence="3">
    <location>
        <begin position="298"/>
        <end position="323"/>
    </location>
</feature>
<feature type="compositionally biased region" description="Acidic residues" evidence="3">
    <location>
        <begin position="353"/>
        <end position="365"/>
    </location>
</feature>
<feature type="compositionally biased region" description="Low complexity" evidence="3">
    <location>
        <begin position="370"/>
        <end position="379"/>
    </location>
</feature>
<feature type="modified residue" description="Phosphoserine" evidence="4">
    <location>
        <position position="372"/>
    </location>
</feature>
<name>YJ03_SCHPO</name>
<comment type="similarity">
    <text evidence="5">Belongs to the UPF0400 (RTT103) family.</text>
</comment>